<keyword id="KW-0560">Oxidoreductase</keyword>
<keyword id="KW-1185">Reference proteome</keyword>
<keyword id="KW-0819">tRNA processing</keyword>
<organism>
    <name type="scientific">Ruegeria pomeroyi (strain ATCC 700808 / DSM 15171 / DSS-3)</name>
    <name type="common">Silicibacter pomeroyi</name>
    <dbReference type="NCBI Taxonomy" id="246200"/>
    <lineage>
        <taxon>Bacteria</taxon>
        <taxon>Pseudomonadati</taxon>
        <taxon>Pseudomonadota</taxon>
        <taxon>Alphaproteobacteria</taxon>
        <taxon>Rhodobacterales</taxon>
        <taxon>Roseobacteraceae</taxon>
        <taxon>Ruegeria</taxon>
    </lineage>
</organism>
<evidence type="ECO:0000255" key="1">
    <source>
        <dbReference type="HAMAP-Rule" id="MF_00469"/>
    </source>
</evidence>
<proteinExistence type="inferred from homology"/>
<name>TRHO_RUEPO</name>
<protein>
    <recommendedName>
        <fullName evidence="1">tRNA uridine(34) hydroxylase</fullName>
        <ecNumber evidence="1">1.14.-.-</ecNumber>
    </recommendedName>
    <alternativeName>
        <fullName evidence="1">tRNA hydroxylation protein O</fullName>
    </alternativeName>
</protein>
<comment type="function">
    <text evidence="1">Catalyzes oxygen-dependent 5-hydroxyuridine (ho5U) modification at position 34 in tRNAs.</text>
</comment>
<comment type="catalytic activity">
    <reaction evidence="1">
        <text>uridine(34) in tRNA + AH2 + O2 = 5-hydroxyuridine(34) in tRNA + A + H2O</text>
        <dbReference type="Rhea" id="RHEA:64224"/>
        <dbReference type="Rhea" id="RHEA-COMP:11727"/>
        <dbReference type="Rhea" id="RHEA-COMP:13381"/>
        <dbReference type="ChEBI" id="CHEBI:13193"/>
        <dbReference type="ChEBI" id="CHEBI:15377"/>
        <dbReference type="ChEBI" id="CHEBI:15379"/>
        <dbReference type="ChEBI" id="CHEBI:17499"/>
        <dbReference type="ChEBI" id="CHEBI:65315"/>
        <dbReference type="ChEBI" id="CHEBI:136877"/>
    </reaction>
</comment>
<comment type="similarity">
    <text evidence="1">Belongs to the TrhO family.</text>
</comment>
<feature type="chain" id="PRO_0000161512" description="tRNA uridine(34) hydroxylase">
    <location>
        <begin position="1"/>
        <end position="301"/>
    </location>
</feature>
<feature type="domain" description="Rhodanese" evidence="1">
    <location>
        <begin position="121"/>
        <end position="215"/>
    </location>
</feature>
<feature type="active site" description="Cysteine persulfide intermediate" evidence="1">
    <location>
        <position position="175"/>
    </location>
</feature>
<accession>Q5LWN8</accession>
<reference key="1">
    <citation type="journal article" date="2004" name="Nature">
        <title>Genome sequence of Silicibacter pomeroyi reveals adaptations to the marine environment.</title>
        <authorList>
            <person name="Moran M.A."/>
            <person name="Buchan A."/>
            <person name="Gonzalez J.M."/>
            <person name="Heidelberg J.F."/>
            <person name="Whitman W.B."/>
            <person name="Kiene R.P."/>
            <person name="Henriksen J.R."/>
            <person name="King G.M."/>
            <person name="Belas R."/>
            <person name="Fuqua C."/>
            <person name="Brinkac L.M."/>
            <person name="Lewis M."/>
            <person name="Johri S."/>
            <person name="Weaver B."/>
            <person name="Pai G."/>
            <person name="Eisen J.A."/>
            <person name="Rahe E."/>
            <person name="Sheldon W.M."/>
            <person name="Ye W."/>
            <person name="Miller T.R."/>
            <person name="Carlton J."/>
            <person name="Rasko D.A."/>
            <person name="Paulsen I.T."/>
            <person name="Ren Q."/>
            <person name="Daugherty S.C."/>
            <person name="DeBoy R.T."/>
            <person name="Dodson R.J."/>
            <person name="Durkin A.S."/>
            <person name="Madupu R."/>
            <person name="Nelson W.C."/>
            <person name="Sullivan S.A."/>
            <person name="Rosovitz M.J."/>
            <person name="Haft D.H."/>
            <person name="Selengut J."/>
            <person name="Ward N."/>
        </authorList>
    </citation>
    <scope>NUCLEOTIDE SEQUENCE [LARGE SCALE GENOMIC DNA]</scope>
    <source>
        <strain>ATCC 700808 / DSM 15171 / DSS-3</strain>
    </source>
</reference>
<reference key="2">
    <citation type="journal article" date="2014" name="Stand. Genomic Sci.">
        <title>An updated genome annotation for the model marine bacterium Ruegeria pomeroyi DSS-3.</title>
        <authorList>
            <person name="Rivers A.R."/>
            <person name="Smith C.B."/>
            <person name="Moran M.A."/>
        </authorList>
    </citation>
    <scope>GENOME REANNOTATION</scope>
    <source>
        <strain>ATCC 700808 / DSM 15171 / DSS-3</strain>
    </source>
</reference>
<sequence length="301" mass="33922">MYTIAALYHFTRFADPADLKPALLDLCLAQGVKGTLLLAKEGINGTIAGPRAGIDAVLAHIRALPGCSDLEWKEATSDHPPFGKMKVRLKQEIVTMGQPDVDPRARVGHYVEPEDWNDLIRSDDVVLIDTRNDYEVAIGTFEGAIDPMTESFRDFPAWWEANKERFHNKRVAMFCTGGIRCEKSTNYLLGQGVEDVYHLKGGILRYLEEVPAENSTWQGECFVFDNRVSVGHGLVEGPHELCHGCRRPILPEDRNRPEYEHGVSCHLCIDETSEADKMRFRERQKQIALARARGEDHLATH</sequence>
<dbReference type="EC" id="1.14.-.-" evidence="1"/>
<dbReference type="EMBL" id="CP000031">
    <property type="protein sequence ID" value="AAV93422.1"/>
    <property type="molecule type" value="Genomic_DNA"/>
</dbReference>
<dbReference type="RefSeq" id="WP_011045864.1">
    <property type="nucleotide sequence ID" value="NC_003911.12"/>
</dbReference>
<dbReference type="SMR" id="Q5LWN8"/>
<dbReference type="STRING" id="246200.SPO0091"/>
<dbReference type="PaxDb" id="246200-SPO0091"/>
<dbReference type="KEGG" id="sil:SPO0091"/>
<dbReference type="eggNOG" id="COG1054">
    <property type="taxonomic scope" value="Bacteria"/>
</dbReference>
<dbReference type="HOGENOM" id="CLU_038878_0_0_5"/>
<dbReference type="OrthoDB" id="9778326at2"/>
<dbReference type="Proteomes" id="UP000001023">
    <property type="component" value="Chromosome"/>
</dbReference>
<dbReference type="GO" id="GO:0016705">
    <property type="term" value="F:oxidoreductase activity, acting on paired donors, with incorporation or reduction of molecular oxygen"/>
    <property type="evidence" value="ECO:0007669"/>
    <property type="project" value="UniProtKB-UniRule"/>
</dbReference>
<dbReference type="GO" id="GO:0006400">
    <property type="term" value="P:tRNA modification"/>
    <property type="evidence" value="ECO:0007669"/>
    <property type="project" value="UniProtKB-UniRule"/>
</dbReference>
<dbReference type="CDD" id="cd01518">
    <property type="entry name" value="RHOD_YceA"/>
    <property type="match status" value="1"/>
</dbReference>
<dbReference type="Gene3D" id="3.30.70.100">
    <property type="match status" value="1"/>
</dbReference>
<dbReference type="Gene3D" id="3.40.250.10">
    <property type="entry name" value="Rhodanese-like domain"/>
    <property type="match status" value="1"/>
</dbReference>
<dbReference type="HAMAP" id="MF_00469">
    <property type="entry name" value="TrhO"/>
    <property type="match status" value="1"/>
</dbReference>
<dbReference type="InterPro" id="IPR001763">
    <property type="entry name" value="Rhodanese-like_dom"/>
</dbReference>
<dbReference type="InterPro" id="IPR036873">
    <property type="entry name" value="Rhodanese-like_dom_sf"/>
</dbReference>
<dbReference type="InterPro" id="IPR020936">
    <property type="entry name" value="TrhO"/>
</dbReference>
<dbReference type="InterPro" id="IPR040503">
    <property type="entry name" value="TRHO_N"/>
</dbReference>
<dbReference type="NCBIfam" id="NF001136">
    <property type="entry name" value="PRK00142.1-4"/>
    <property type="match status" value="1"/>
</dbReference>
<dbReference type="PANTHER" id="PTHR43268:SF3">
    <property type="entry name" value="RHODANESE-LIKE DOMAIN-CONTAINING PROTEIN 7-RELATED"/>
    <property type="match status" value="1"/>
</dbReference>
<dbReference type="PANTHER" id="PTHR43268">
    <property type="entry name" value="THIOSULFATE SULFURTRANSFERASE/RHODANESE-LIKE DOMAIN-CONTAINING PROTEIN 2"/>
    <property type="match status" value="1"/>
</dbReference>
<dbReference type="Pfam" id="PF00581">
    <property type="entry name" value="Rhodanese"/>
    <property type="match status" value="1"/>
</dbReference>
<dbReference type="Pfam" id="PF17773">
    <property type="entry name" value="UPF0176_N"/>
    <property type="match status" value="1"/>
</dbReference>
<dbReference type="SMART" id="SM00450">
    <property type="entry name" value="RHOD"/>
    <property type="match status" value="1"/>
</dbReference>
<dbReference type="SUPFAM" id="SSF52821">
    <property type="entry name" value="Rhodanese/Cell cycle control phosphatase"/>
    <property type="match status" value="1"/>
</dbReference>
<dbReference type="PROSITE" id="PS50206">
    <property type="entry name" value="RHODANESE_3"/>
    <property type="match status" value="1"/>
</dbReference>
<gene>
    <name evidence="1" type="primary">trhO</name>
    <name type="ordered locus">SPO0091</name>
</gene>